<accession>Q59L12</accession>
<accession>A0A1D8PTD3</accession>
<accession>Q874L2</accession>
<accession>Q874L3</accession>
<reference key="1">
    <citation type="journal article" date="2004" name="Microbiology">
        <title>ALS3 and ALS8 represent a single locus that encodes a Candida albicans adhesin; functional comparisons between Als3p and Als1p.</title>
        <authorList>
            <person name="Zhao X."/>
            <person name="Oh S.H."/>
            <person name="Cheng G."/>
            <person name="Green C.B."/>
            <person name="Nuessen J.A."/>
            <person name="Yeater K."/>
            <person name="Leng R.P."/>
            <person name="Brown A.J."/>
            <person name="Hoyer L.L."/>
        </authorList>
    </citation>
    <scope>NUCLEOTIDE SEQUENCE [GENOMIC DNA]</scope>
    <scope>INDUCTION</scope>
    <scope>FUNCTION</scope>
    <scope>DISRUPTION PHENOTYPE</scope>
    <scope>VARIANTS</scope>
    <source>
        <strain>SC5314 / ATCC MYA-2876</strain>
    </source>
</reference>
<reference key="2">
    <citation type="journal article" date="2004" name="Proc. Natl. Acad. Sci. U.S.A.">
        <title>The diploid genome sequence of Candida albicans.</title>
        <authorList>
            <person name="Jones T."/>
            <person name="Federspiel N.A."/>
            <person name="Chibana H."/>
            <person name="Dungan J."/>
            <person name="Kalman S."/>
            <person name="Magee B.B."/>
            <person name="Newport G."/>
            <person name="Thorstenson Y.R."/>
            <person name="Agabian N."/>
            <person name="Magee P.T."/>
            <person name="Davis R.W."/>
            <person name="Scherer S."/>
        </authorList>
    </citation>
    <scope>NUCLEOTIDE SEQUENCE [LARGE SCALE GENOMIC DNA]</scope>
    <source>
        <strain>SC5314 / ATCC MYA-2876</strain>
    </source>
</reference>
<reference key="3">
    <citation type="journal article" date="2007" name="Genome Biol.">
        <title>Assembly of the Candida albicans genome into sixteen supercontigs aligned on the eight chromosomes.</title>
        <authorList>
            <person name="van het Hoog M."/>
            <person name="Rast T.J."/>
            <person name="Martchenko M."/>
            <person name="Grindle S."/>
            <person name="Dignard D."/>
            <person name="Hogues H."/>
            <person name="Cuomo C."/>
            <person name="Berriman M."/>
            <person name="Scherer S."/>
            <person name="Magee B.B."/>
            <person name="Whiteway M."/>
            <person name="Chibana H."/>
            <person name="Nantel A."/>
            <person name="Magee P.T."/>
        </authorList>
    </citation>
    <scope>GENOME REANNOTATION</scope>
    <source>
        <strain>SC5314 / ATCC MYA-2876</strain>
    </source>
</reference>
<reference key="4">
    <citation type="journal article" date="2013" name="Genome Biol.">
        <title>Assembly of a phased diploid Candida albicans genome facilitates allele-specific measurements and provides a simple model for repeat and indel structure.</title>
        <authorList>
            <person name="Muzzey D."/>
            <person name="Schwartz K."/>
            <person name="Weissman J.S."/>
            <person name="Sherlock G."/>
        </authorList>
    </citation>
    <scope>NUCLEOTIDE SEQUENCE [LARGE SCALE GENOMIC DNA]</scope>
    <scope>GENOME REANNOTATION</scope>
    <source>
        <strain>SC5314 / ATCC MYA-2876</strain>
    </source>
</reference>
<reference key="5">
    <citation type="journal article" date="1999" name="Infect. Immun.">
        <title>Detection of Als proteins on the cell wall of Candida albicans in murine tissues.</title>
        <authorList>
            <person name="Hoyer L.L."/>
            <person name="Clevenger J."/>
            <person name="Hecht J.E."/>
            <person name="Ehrhart E.J."/>
            <person name="Poulet F.M."/>
        </authorList>
    </citation>
    <scope>SUBCELLULAR LOCATION</scope>
</reference>
<reference key="6">
    <citation type="journal article" date="2003" name="Yeast">
        <title>Genome-wide identification of fungal GPI proteins.</title>
        <authorList>
            <person name="De Groot P.W."/>
            <person name="Hellingwerf K.J."/>
            <person name="Klis F.M."/>
        </authorList>
    </citation>
    <scope>PREDICTION OF GPI-ANCHOR</scope>
</reference>
<reference key="7">
    <citation type="journal article" date="2004" name="J. Biol. Chem.">
        <title>Functional and structural diversity in the Als protein family of Candida albicans.</title>
        <authorList>
            <person name="Sheppard D.C."/>
            <person name="Yeaman M.R."/>
            <person name="Welch W.H."/>
            <person name="Phan Q.T."/>
            <person name="Fu Y."/>
            <person name="Ibrahim A.S."/>
            <person name="Filler S.G."/>
            <person name="Zhang M."/>
            <person name="Waring A.J."/>
            <person name="Edwards J.E. Jr."/>
        </authorList>
    </citation>
    <scope>FUNCTION</scope>
    <scope>DOMAIN</scope>
</reference>
<reference key="8">
    <citation type="journal article" date="2005" name="Infect. Immun.">
        <title>Use of green fluorescent protein and reverse transcription-PCR to monitor Candida albicans agglutinin-like sequence gene expression in a murine model of disseminated candidiasis.</title>
        <authorList>
            <person name="Green C.B."/>
            <person name="Zhao X."/>
            <person name="Hoyer L.L."/>
        </authorList>
    </citation>
    <scope>INDUCTION</scope>
</reference>
<reference key="9">
    <citation type="journal article" date="2006" name="PLoS Pathog.">
        <title>Critical role of Bcr1-dependent adhesins in C. albicans biofilm formation in vitro and in vivo.</title>
        <authorList>
            <person name="Nobile C.J."/>
            <person name="Andes D.R."/>
            <person name="Nett J.E."/>
            <person name="Smith F.J."/>
            <person name="Yue F."/>
            <person name="Phan Q.T."/>
            <person name="Edwards J.E."/>
            <person name="Filler S.G."/>
            <person name="Mitchell A.P."/>
        </authorList>
    </citation>
    <scope>FUNCTION</scope>
</reference>
<reference key="10">
    <citation type="journal article" date="2007" name="Eukaryot. Cell">
        <title>Candida albicans Sfl1 suppresses flocculation and filamentation.</title>
        <authorList>
            <person name="Bauer J."/>
            <person name="Wendland J."/>
        </authorList>
    </citation>
    <scope>INDUCTION</scope>
</reference>
<reference key="11">
    <citation type="journal article" date="2007" name="Med. Mycol.">
        <title>Candida albicans Als proteins mediate aggregation with bacteria and yeasts.</title>
        <authorList>
            <person name="Klotz S.A."/>
            <person name="Gaur N.K."/>
            <person name="De Armond R."/>
            <person name="Sheppard D."/>
            <person name="Khardori N."/>
            <person name="Edwards J.E. Jr."/>
            <person name="Lipke P.N."/>
            <person name="El-Azizi M."/>
        </authorList>
    </citation>
    <scope>FUNCTION</scope>
</reference>
<reference key="12">
    <citation type="journal article" date="2008" name="Curr. Biol.">
        <title>Complementary adhesin function in C. albicans biofilm formation.</title>
        <authorList>
            <person name="Nobile C.J."/>
            <person name="Schneider H.A."/>
            <person name="Nett J.E."/>
            <person name="Sheppard D.C."/>
            <person name="Filler S.G."/>
            <person name="Andes D.R."/>
            <person name="Mitchell A.P."/>
        </authorList>
    </citation>
    <scope>FUNCTION</scope>
</reference>
<reference key="13">
    <citation type="journal article" date="2008" name="Proteomics">
        <title>A study of the Candida albicans cell wall proteome.</title>
        <authorList>
            <person name="Castillo L."/>
            <person name="Calvo E."/>
            <person name="Martinez A.I."/>
            <person name="Ruiz-Herrera J."/>
            <person name="Valentin E."/>
            <person name="Lopez J.A."/>
            <person name="Sentandreu R."/>
        </authorList>
    </citation>
    <scope>IDENTIFICATION BY MASS SPECTROMETRY</scope>
    <scope>SUBCELLULAR LOCATION</scope>
</reference>
<reference key="14">
    <citation type="journal article" date="2009" name="Mycopathologia">
        <title>Monitoring ALS1 and ALS3 gene expression during in vitro Candida albicans biofilm formation under continuous flow conditions.</title>
        <authorList>
            <person name="Nailis H."/>
            <person name="Vandenbroucke R."/>
            <person name="Tilleman K."/>
            <person name="Deforce D."/>
            <person name="Nelis H."/>
            <person name="Coenye T."/>
        </authorList>
    </citation>
    <scope>INDUCTION</scope>
</reference>
<reference key="15">
    <citation type="journal article" date="2009" name="FEMS Immunol. Med. Microbiol.">
        <title>Recognition of Candida albicans Als3 by the germ tube-specific monoclonal antibody 3D9.3.</title>
        <authorList>
            <person name="Beucher B."/>
            <person name="Marot-Leblond A."/>
            <person name="Billaud-Nail S."/>
            <person name="Oh S.H."/>
            <person name="Hoyer L.L."/>
            <person name="Robert R."/>
        </authorList>
    </citation>
    <scope>IDENTIFICATION AS THE 3D9 ANTIGEN</scope>
    <scope>SUBCELLULAR LOCATION</scope>
</reference>
<reference key="16">
    <citation type="journal article" date="2010" name="BMC Microbiol.">
        <title>Real-time PCR expression profiling of genes encoding potential virulence factors in Candida albicans biofilms: identification of model-dependent and -independent gene expression.</title>
        <authorList>
            <person name="Nailis H."/>
            <person name="Kucharikova S."/>
            <person name="Ricicova M."/>
            <person name="Van Dijck P."/>
            <person name="Deforce D."/>
            <person name="Nelis H."/>
            <person name="Coenye T."/>
        </authorList>
    </citation>
    <scope>INDUCTION</scope>
</reference>
<reference key="17">
    <citation type="journal article" date="2011" name="Microbiology">
        <title>Mass spectrometric quantification of the adaptations in the wall proteome of Candida albicans in response to ambient pH.</title>
        <authorList>
            <person name="Sosinska G.J."/>
            <person name="de Koning L.J."/>
            <person name="de Groot P.W."/>
            <person name="Manders E.M."/>
            <person name="Dekker H.L."/>
            <person name="Hellingwerf K.J."/>
            <person name="de Koster C.G."/>
            <person name="Klis F.M."/>
        </authorList>
    </citation>
    <scope>SUBCELLULAR LOCATION</scope>
    <scope>IDENTIFICATION BY MASS SPECTROMETRY</scope>
    <scope>INDUCTION</scope>
</reference>
<reference key="18">
    <citation type="journal article" date="2011" name="Yeast">
        <title>Candida albicans Tpk1p and Tpk2p isoforms differentially regulate pseudohyphal development, biofilm structure, cell aggregation and adhesins expression.</title>
        <authorList>
            <person name="Giacometti R."/>
            <person name="Kronberg F."/>
            <person name="Biondi R.M."/>
            <person name="Passeron S."/>
        </authorList>
    </citation>
    <scope>INDUCTION</scope>
</reference>
<reference key="19">
    <citation type="journal article" date="2012" name="FEMS Immunol. Med. Microbiol.">
        <title>A monoclonal antibody specific for Candida albicans Als4 demonstrates overlapping localization of Als family proteins on the fungal cell surface and highlights differences between Als localization in vitro and in vivo.</title>
        <authorList>
            <person name="Coleman D.A."/>
            <person name="Oh S.H."/>
            <person name="Manfra-Maretta S.L."/>
            <person name="Hoyer L.L."/>
        </authorList>
    </citation>
    <scope>SUBCELLULAR LOCATION</scope>
</reference>
<reference key="20">
    <citation type="journal article" date="2012" name="FEMS Immunol. Med. Microbiol.">
        <title>Profiling of adhesive properties of the agglutinin-like sequence (ALS) protein family, a virulent attribute of Candida albicans.</title>
        <authorList>
            <person name="Aoki W."/>
            <person name="Kitahara N."/>
            <person name="Miura N."/>
            <person name="Morisaka H."/>
            <person name="Kuroda K."/>
            <person name="Ueda M."/>
        </authorList>
    </citation>
    <scope>FUNCTION</scope>
</reference>
<reference key="21">
    <citation type="journal article" date="2012" name="Eukaryot. Cell">
        <title>Divergent targets of Candida albicans biofilm regulator Bcr1 in vitro and in vivo.</title>
        <authorList>
            <person name="Fanning S."/>
            <person name="Xu W."/>
            <person name="Solis N."/>
            <person name="Woolford C.A."/>
            <person name="Filler S.G."/>
            <person name="Mitchell A.P."/>
        </authorList>
    </citation>
    <scope>FUNCTION</scope>
    <scope>INDUCTION</scope>
</reference>
<reference key="22">
    <citation type="journal article" date="2012" name="PLoS ONE">
        <title>Evaluation of the role of Candida albicans agglutinin-like sequence (Als) proteins in human oral epithelial cell interactions.</title>
        <authorList>
            <person name="Murciano C."/>
            <person name="Moyes D.L."/>
            <person name="Runglall M."/>
            <person name="Tobouti P."/>
            <person name="Islam A."/>
            <person name="Hoyer L.L."/>
            <person name="Naglik J.R."/>
        </authorList>
    </citation>
    <scope>DISRUPTION PHENOTYPE</scope>
</reference>
<reference key="23">
    <citation type="journal article" date="2012" name="PLoS ONE">
        <title>In vivo inhibitory effect on the biofilm formation of Candida albicans by liverwort derived riccardin D.</title>
        <authorList>
            <person name="Li Y."/>
            <person name="Ma Y."/>
            <person name="Zhang L."/>
            <person name="Guo F."/>
            <person name="Ren L."/>
            <person name="Yang R."/>
            <person name="Li Y."/>
            <person name="Lou H."/>
        </authorList>
    </citation>
    <scope>INDUCTION</scope>
</reference>
<reference key="24">
    <citation type="journal article" date="2012" name="Mycoses">
        <title>Frequency and expression of ALS and HWP1 genotypes in Candida albicans strains isolated from Mexican patients suffering from vaginal candidosis.</title>
        <authorList>
            <person name="Monroy-Perez E."/>
            <person name="Sainz-Espunes T."/>
            <person name="Paniagua-Contreras G."/>
            <person name="Negrete-Abascal E."/>
            <person name="Rodriguez-Moctezuma J.R."/>
            <person name="Vaca S."/>
        </authorList>
    </citation>
    <scope>FUNCTION</scope>
</reference>
<reference key="25">
    <citation type="journal article" date="2013" name="Infect. Immun.">
        <title>Investigation of the function of Candida albicans Als3 by heterologous expression in Candida glabrata.</title>
        <authorList>
            <person name="Fu Y."/>
            <person name="Phan Q.T."/>
            <person name="Luo G."/>
            <person name="Solis N.V."/>
            <person name="Liu Y."/>
            <person name="Cormack B.P."/>
            <person name="Edwards J.E. Jr."/>
            <person name="Ibrahim A.S."/>
            <person name="Filler S.G."/>
        </authorList>
    </citation>
    <scope>FUNCTION</scope>
</reference>
<reference key="26">
    <citation type="journal article" date="2013" name="Langmuir">
        <title>Quantifying the forces driving cell-cell adhesion in a fungal pathogen.</title>
        <authorList>
            <person name="Alsteens D."/>
            <person name="Van Dijck P."/>
            <person name="Lipke P.N."/>
            <person name="Dufrene Y.F."/>
        </authorList>
    </citation>
    <scope>FUNCTION</scope>
</reference>
<reference key="27">
    <citation type="journal article" date="2013" name="Mol. Microbiol.">
        <title>A family of secreted pathogenesis-related proteins in Candida albicans.</title>
        <authorList>
            <person name="Rohm M."/>
            <person name="Lindemann E."/>
            <person name="Hiller E."/>
            <person name="Ermert D."/>
            <person name="Lemuth K."/>
            <person name="Trkulja D."/>
            <person name="Sogukpinar O."/>
            <person name="Brunner H."/>
            <person name="Rupp S."/>
            <person name="Urban C.F."/>
            <person name="Sohn K."/>
        </authorList>
    </citation>
    <scope>IDENTIFICATION BY MASS SPECTROMETRY</scope>
    <scope>SUBCELLULAR LOCATION</scope>
</reference>
<reference key="28">
    <citation type="journal article" date="2014" name="Antimicrob. Agents Chemother.">
        <title>In vitro and in vivo activities of pterostilbene against Candida albicans biofilms.</title>
        <authorList>
            <person name="Li D.D."/>
            <person name="Zhao L.X."/>
            <person name="Mylonakis E."/>
            <person name="Hu G.H."/>
            <person name="Zou Y."/>
            <person name="Huang T.K."/>
            <person name="Yan L."/>
            <person name="Wang Y."/>
            <person name="Jiang Y.Y."/>
        </authorList>
    </citation>
    <scope>INDUCTION</scope>
</reference>
<reference key="29">
    <citation type="journal article" date="2014" name="Antonie Van Leeuwenhoek">
        <title>Lipopeptides from Bacillus strain AR2 inhibits biofilm formation by Candida albicans.</title>
        <authorList>
            <person name="Rautela R."/>
            <person name="Singh A.K."/>
            <person name="Shukla A."/>
            <person name="Cameotra S.S."/>
        </authorList>
    </citation>
    <scope>INDUCTION</scope>
</reference>
<reference key="30">
    <citation type="journal article" date="2014" name="BMC Microbiol.">
        <title>Human serum inhibits adhesion and biofilm formation in Candida albicans.</title>
        <authorList>
            <person name="Ding X."/>
            <person name="Liu Z."/>
            <person name="Su J."/>
            <person name="Yan D."/>
        </authorList>
    </citation>
    <scope>INDUCTION</scope>
</reference>
<reference key="31">
    <citation type="journal article" date="2014" name="MBio">
        <title>O-mannosylation in Candida albicans enables development of interkingdom biofilm communities.</title>
        <authorList>
            <person name="Dutton L.C."/>
            <person name="Nobbs A.H."/>
            <person name="Jepson K."/>
            <person name="Jepson M.A."/>
            <person name="Vickerman M.M."/>
            <person name="Aqeel Alawfi S."/>
            <person name="Munro C.A."/>
            <person name="Lamont R.J."/>
            <person name="Jenkinson H.F."/>
        </authorList>
    </citation>
    <scope>FUNCTION</scope>
    <scope>SUBCELLULAR LOCATION</scope>
</reference>
<reference key="32">
    <citation type="journal article" date="2014" name="PLoS ONE">
        <title>Participation of Candida albicans transcription factor RLM1 in cell wall biogenesis and virulence.</title>
        <authorList>
            <person name="Delgado-Silva Y."/>
            <person name="Vaz C."/>
            <person name="Carvalho-Pereira J."/>
            <person name="Carneiro C."/>
            <person name="Nogueira E."/>
            <person name="Correia A."/>
            <person name="Carreto L."/>
            <person name="Silva S."/>
            <person name="Faustino A."/>
            <person name="Pais C."/>
            <person name="Oliveira R."/>
            <person name="Sampaio P."/>
        </authorList>
    </citation>
    <scope>INDUCTION</scope>
</reference>
<reference key="33">
    <citation type="journal article" date="2014" name="PLoS ONE">
        <title>Therapeutic Potential of Thiazolidinedione-8 as an Antibiofilm Agent against Candida albicans.</title>
        <authorList>
            <person name="Feldman M."/>
            <person name="Al-Quntar A."/>
            <person name="Polacheck I."/>
            <person name="Friedman M."/>
            <person name="Steinberg D."/>
        </authorList>
    </citation>
    <scope>INDUCTION</scope>
</reference>
<reference key="34">
    <citation type="journal article" date="2014" name="J. Biol. Chem.">
        <title>The peptide-binding cavity is essential for Als3-mediated adhesion of Candida albicans to human cells.</title>
        <authorList>
            <person name="Lin J."/>
            <person name="Oh S.H."/>
            <person name="Jones R."/>
            <person name="Garnett J.A."/>
            <person name="Salgado P.S."/>
            <person name="Rusnakova S."/>
            <person name="Matthews S.J."/>
            <person name="Hoyer L.L."/>
            <person name="Cota E."/>
        </authorList>
    </citation>
    <scope>X-RAY CRYSTALLOGRAPHY (1.40 ANGSTROMS) OF 18-330</scope>
    <scope>DISULFIDE BONDS</scope>
</reference>
<sequence length="1155" mass="123759">MLQQYTLLLIYLSVATAKTITGVFNSFNSLTWSNAATYNYKGPGTPTWNAVLGWSLDGTSASPGDTFTLNMPCVFKFTTSQTSVDLTAHGVKYATCQFQAGEEFMTFSTLTCTVSNTLTPSIKALGTVTLPLAFNVGGTGSSVDLEDSKCFTAGTNTVTFNDGGKKISINVDFERSNVDPKGYLTDSRVIPSLNKVSTLFVAPQCANGYTSGTMGFANTYGDVQIDCSNIHVGITKGLNDWNYPVSSESFSYTKTCSSNGIFITYKNVPAGYRPFVDAYISATDVNSYTLSYANEYTCAGGYWQRAPFTLRWTGYRNSDAGSNGIVIVATTRTVTDSTTAVTTLPFDPNRDKTKTIEILKPIPTTTITTSYVGVTTSYSTKTAPIGETATVIVDIPYHTTTTVTSKWTGTITSTTTHTNPTDSIDTVIVQVPSPNPTVTTTEYWSQSFATTTTITGPPGNTDTVLIREPPNHTVTTTEYWSESYTTTSTFTAPPGGTDSVIIKEPPNPTVTTTEYWSESYTTTTTVTAPPGGTDTVIIREPPNHTVTTTEYWSQSYTTTTTVIAPPGGTDSVIIREPPNPTVTTTEYWSQSYATTTTITAPPGETDTVLIREPPNHTVTTTEYWSQSYATTTTITAPPGETDTVLIREPPNHTVTTTEYWSQSYTTTTTVIAPPGGTDSVIIKEPPNPTVTTTEYWSQSYATTTTITAPPGETDTVLIREPPNHTVTTTEYWSQSYATTTTITAPPGETDTVLIREPPNHTVTTTEYWSQSFATTTTVTAPPGGTDTVIIREPPNHTVTTTEYWSQSFATTTTIIAPPGETDTVLIREPPNPTVTTTEYWSQSYTTATTVTAPPGGTDTVIIYDTMSSSEISSFSRPHYTNHTTLWSTTWVIETKTITETSCEGDKGCSWVSVSTRIVTIPNNIETPMVTNTVDTTTTESTLQSPSGIFSESGVSVETESSTFTTAQTNPSVPTTESEVVFTTKGNNGNGPYESPSTNVKSSMDENSEFTTSTAASTSTDIENETIATTGSVEASSPIISSSADETTTVTTTAESTSVIEQQTNNNGGGNAPSATSTSSPSTTTTANSDSVITSTTSTNQSQSQSNSDTQQTTLSQQMTSSLVSLHMLTTFDGSGSVIQHSTWLCGLITLLSLFI</sequence>
<evidence type="ECO:0000255" key="1"/>
<evidence type="ECO:0000256" key="2">
    <source>
        <dbReference type="SAM" id="MobiDB-lite"/>
    </source>
</evidence>
<evidence type="ECO:0000269" key="3">
    <source>
    </source>
</evidence>
<evidence type="ECO:0000269" key="4">
    <source>
    </source>
</evidence>
<evidence type="ECO:0000269" key="5">
    <source>
    </source>
</evidence>
<evidence type="ECO:0000269" key="6">
    <source>
    </source>
</evidence>
<evidence type="ECO:0000269" key="7">
    <source>
    </source>
</evidence>
<evidence type="ECO:0000269" key="8">
    <source>
    </source>
</evidence>
<evidence type="ECO:0000269" key="9">
    <source>
    </source>
</evidence>
<evidence type="ECO:0000269" key="10">
    <source>
    </source>
</evidence>
<evidence type="ECO:0000269" key="11">
    <source>
    </source>
</evidence>
<evidence type="ECO:0000269" key="12">
    <source>
    </source>
</evidence>
<evidence type="ECO:0000269" key="13">
    <source>
    </source>
</evidence>
<evidence type="ECO:0000269" key="14">
    <source>
    </source>
</evidence>
<evidence type="ECO:0000269" key="15">
    <source>
    </source>
</evidence>
<evidence type="ECO:0000269" key="16">
    <source>
    </source>
</evidence>
<evidence type="ECO:0000269" key="17">
    <source>
    </source>
</evidence>
<evidence type="ECO:0000269" key="18">
    <source>
    </source>
</evidence>
<evidence type="ECO:0000269" key="19">
    <source>
    </source>
</evidence>
<evidence type="ECO:0000269" key="20">
    <source>
    </source>
</evidence>
<evidence type="ECO:0000269" key="21">
    <source>
    </source>
</evidence>
<evidence type="ECO:0000269" key="22">
    <source>
    </source>
</evidence>
<evidence type="ECO:0000269" key="23">
    <source>
    </source>
</evidence>
<evidence type="ECO:0000269" key="24">
    <source>
    </source>
</evidence>
<evidence type="ECO:0000269" key="25">
    <source>
    </source>
</evidence>
<evidence type="ECO:0000269" key="26">
    <source>
    </source>
</evidence>
<evidence type="ECO:0000269" key="27">
    <source>
    </source>
</evidence>
<evidence type="ECO:0000269" key="28">
    <source>
    </source>
</evidence>
<evidence type="ECO:0000269" key="29">
    <source>
    </source>
</evidence>
<evidence type="ECO:0000269" key="30">
    <source>
    </source>
</evidence>
<evidence type="ECO:0000269" key="31">
    <source>
    </source>
</evidence>
<evidence type="ECO:0000269" key="32">
    <source>
    </source>
</evidence>
<evidence type="ECO:0000305" key="33"/>
<evidence type="ECO:0000305" key="34">
    <source>
    </source>
</evidence>
<evidence type="ECO:0007744" key="35">
    <source>
        <dbReference type="PDB" id="4LE8"/>
    </source>
</evidence>
<evidence type="ECO:0007744" key="36">
    <source>
        <dbReference type="PDB" id="4LEB"/>
    </source>
</evidence>
<evidence type="ECO:0007744" key="37">
    <source>
        <dbReference type="PDB" id="4LEE"/>
    </source>
</evidence>
<evidence type="ECO:0007829" key="38">
    <source>
        <dbReference type="PDB" id="4LEB"/>
    </source>
</evidence>
<evidence type="ECO:0007829" key="39">
    <source>
        <dbReference type="PDB" id="4LEE"/>
    </source>
</evidence>
<comment type="function">
    <text evidence="4 5 7 8 10 18 20 21 24 25 30">Cell surface adhesion protein which mediates both yeast-to-host tissue adherence and yeast aggregation. Plays an important role in the biofilm formation and pathogenesis of C.albicans infections. Necessary for C.albicans to bind to N-cadherin on endothelial cells and E-cadherin on oral epithelial cells and subsequent endocytosis by these cells. During disseminated infection, mediates initial trafficking to the brain and renal cortex and contributes to fungal persistence in the kidneys.</text>
</comment>
<comment type="subcellular location">
    <subcellularLocation>
        <location>Cell membrane</location>
        <topology evidence="34">Lipid-anchor</topology>
        <topology evidence="34">GPI-anchor</topology>
    </subcellularLocation>
    <subcellularLocation>
        <location evidence="3 12 13 15 17 23 30">Secreted</location>
        <location evidence="3 12 13 15 17 23 30">Cell wall</location>
    </subcellularLocation>
    <text evidence="13 17">Covers the surface of the germ tube.</text>
</comment>
<comment type="induction">
    <text evidence="5 6 9 11 14 15 16 21 22 26 27 28 29 31">Expression is under the positive control of the biofilm regulator BCR1, RLM1, TOR1 and TPK2; and under the negative control of SFL1. Induced during germ tube formation. Highly expressed in oropharyngeal candidiasis (OPC), a biofilm-like infection of the oral mucosa. Induced in the initial stages of biofilm formation. Down-regulated by human serum, as well as by bacterial quorum sensing quencher thiazolidinedione-8, pterostilbene, lipopeptides biosurfactant produced by B.amyloliquefaciens, and Riccardin D, a macrocyclic bisbibenzyl isolated from Chinese liverwort D.hirsute, which has an inhibitory effect on biofilms and virulence.</text>
</comment>
<comment type="domain">
    <text evidence="4">Each ALS protein has a similar three-domain structure, including a N-ter domain of 433-436 amino acids that is 55-90 percent identical across the family and which mediates adherence to various materials; a central domain of variable numbers of tandemly repeated copies of a 36 amino acid motif; and a C-ter; domain that is relatively variable in length and sequence across the family.</text>
</comment>
<comment type="PTM">
    <text evidence="34">The GPI-anchor is attached to the protein in the endoplasmic reticulum and serves to target the protein to the cell surface. There, the glucosamine-inositol phospholipid moiety is cleaved off and the GPI-modified mannoprotein is covalently attached via its lipidless GPI glycan remnant to the 1,6-beta-glucan of the outer cell wall layer.</text>
</comment>
<comment type="disruption phenotype">
    <text evidence="5 19">Reduces adhesion and damage to both human umbilical vein endothelial cells (HUVEC) and oral epithelial cells.</text>
</comment>
<comment type="similarity">
    <text evidence="33">Belongs to the ALS family.</text>
</comment>
<organism>
    <name type="scientific">Candida albicans (strain SC5314 / ATCC MYA-2876)</name>
    <name type="common">Yeast</name>
    <dbReference type="NCBI Taxonomy" id="237561"/>
    <lineage>
        <taxon>Eukaryota</taxon>
        <taxon>Fungi</taxon>
        <taxon>Dikarya</taxon>
        <taxon>Ascomycota</taxon>
        <taxon>Saccharomycotina</taxon>
        <taxon>Pichiomycetes</taxon>
        <taxon>Debaryomycetaceae</taxon>
        <taxon>Candida/Lodderomyces clade</taxon>
        <taxon>Candida</taxon>
    </lineage>
</organism>
<keyword id="KW-0002">3D-structure</keyword>
<keyword id="KW-0130">Cell adhesion</keyword>
<keyword id="KW-1003">Cell membrane</keyword>
<keyword id="KW-0134">Cell wall</keyword>
<keyword id="KW-1015">Disulfide bond</keyword>
<keyword id="KW-0325">Glycoprotein</keyword>
<keyword id="KW-0336">GPI-anchor</keyword>
<keyword id="KW-0449">Lipoprotein</keyword>
<keyword id="KW-0472">Membrane</keyword>
<keyword id="KW-1185">Reference proteome</keyword>
<keyword id="KW-0677">Repeat</keyword>
<keyword id="KW-0964">Secreted</keyword>
<keyword id="KW-0732">Signal</keyword>
<keyword id="KW-0843">Virulence</keyword>
<protein>
    <recommendedName>
        <fullName>Agglutinin-like protein 3</fullName>
    </recommendedName>
    <alternativeName>
        <fullName>3D9 antigen</fullName>
    </alternativeName>
    <alternativeName>
        <fullName>Adhesin 3</fullName>
    </alternativeName>
</protein>
<dbReference type="EMBL" id="AY223552">
    <property type="protein sequence ID" value="AAO72959.1"/>
    <property type="molecule type" value="Genomic_DNA"/>
</dbReference>
<dbReference type="EMBL" id="AY223551">
    <property type="protein sequence ID" value="AAO72958.1"/>
    <property type="molecule type" value="Genomic_DNA"/>
</dbReference>
<dbReference type="EMBL" id="CP017630">
    <property type="protein sequence ID" value="AOW31402.1"/>
    <property type="molecule type" value="Genomic_DNA"/>
</dbReference>
<dbReference type="RefSeq" id="XP_710435.2">
    <property type="nucleotide sequence ID" value="XM_705343.2"/>
</dbReference>
<dbReference type="PDB" id="4LE8">
    <property type="method" value="X-ray"/>
    <property type="resolution" value="1.75 A"/>
    <property type="chains" value="A/B=18-316"/>
</dbReference>
<dbReference type="PDB" id="4LEB">
    <property type="method" value="X-ray"/>
    <property type="resolution" value="1.40 A"/>
    <property type="chains" value="A=18-316"/>
</dbReference>
<dbReference type="PDB" id="4LEE">
    <property type="method" value="X-ray"/>
    <property type="resolution" value="3.00 A"/>
    <property type="chains" value="A/B/C/D=18-330"/>
</dbReference>
<dbReference type="PDBsum" id="4LE8"/>
<dbReference type="PDBsum" id="4LEB"/>
<dbReference type="PDBsum" id="4LEE"/>
<dbReference type="SMR" id="Q59L12"/>
<dbReference type="STRING" id="237561.Q59L12"/>
<dbReference type="GlyCosmos" id="Q59L12">
    <property type="glycosylation" value="10 sites, No reported glycans"/>
</dbReference>
<dbReference type="EnsemblFungi" id="CR_07070C_A-T">
    <property type="protein sequence ID" value="CR_07070C_A-T-p1"/>
    <property type="gene ID" value="CR_07070C_A"/>
</dbReference>
<dbReference type="GeneID" id="3647965"/>
<dbReference type="KEGG" id="cal:CAALFM_CR07070CA"/>
<dbReference type="CGD" id="CAL0000183666">
    <property type="gene designation" value="ALS3"/>
</dbReference>
<dbReference type="VEuPathDB" id="FungiDB:CR_07070C_A"/>
<dbReference type="eggNOG" id="ENOG502RGCG">
    <property type="taxonomic scope" value="Eukaryota"/>
</dbReference>
<dbReference type="HOGENOM" id="CLU_011374_0_0_1"/>
<dbReference type="InParanoid" id="Q59L12"/>
<dbReference type="OrthoDB" id="3981162at2759"/>
<dbReference type="EvolutionaryTrace" id="Q59L12"/>
<dbReference type="PHI-base" id="PHI:11386"/>
<dbReference type="PHI-base" id="PHI:123268"/>
<dbReference type="PHI-base" id="PHI:527"/>
<dbReference type="PRO" id="PR:Q59L12"/>
<dbReference type="Proteomes" id="UP000000559">
    <property type="component" value="Chromosome R"/>
</dbReference>
<dbReference type="GO" id="GO:0009986">
    <property type="term" value="C:cell surface"/>
    <property type="evidence" value="ECO:0000314"/>
    <property type="project" value="CGD"/>
</dbReference>
<dbReference type="GO" id="GO:0005576">
    <property type="term" value="C:extracellular region"/>
    <property type="evidence" value="ECO:0000314"/>
    <property type="project" value="CGD"/>
</dbReference>
<dbReference type="GO" id="GO:1903561">
    <property type="term" value="C:extracellular vesicle"/>
    <property type="evidence" value="ECO:0000314"/>
    <property type="project" value="CGD"/>
</dbReference>
<dbReference type="GO" id="GO:0009277">
    <property type="term" value="C:fungal-type cell wall"/>
    <property type="evidence" value="ECO:0000314"/>
    <property type="project" value="CGD"/>
</dbReference>
<dbReference type="GO" id="GO:0030446">
    <property type="term" value="C:hyphal cell wall"/>
    <property type="evidence" value="ECO:0000314"/>
    <property type="project" value="CGD"/>
</dbReference>
<dbReference type="GO" id="GO:0005886">
    <property type="term" value="C:plasma membrane"/>
    <property type="evidence" value="ECO:0007669"/>
    <property type="project" value="UniProtKB-SubCell"/>
</dbReference>
<dbReference type="GO" id="GO:0098552">
    <property type="term" value="C:side of membrane"/>
    <property type="evidence" value="ECO:0007669"/>
    <property type="project" value="UniProtKB-KW"/>
</dbReference>
<dbReference type="GO" id="GO:0030445">
    <property type="term" value="C:yeast-form cell wall"/>
    <property type="evidence" value="ECO:0000314"/>
    <property type="project" value="CGD"/>
</dbReference>
<dbReference type="GO" id="GO:0050839">
    <property type="term" value="F:cell adhesion molecule binding"/>
    <property type="evidence" value="ECO:0000314"/>
    <property type="project" value="CGD"/>
</dbReference>
<dbReference type="GO" id="GO:0030985">
    <property type="term" value="F:high molecular weight kininogen binding"/>
    <property type="evidence" value="ECO:0000314"/>
    <property type="project" value="CGD"/>
</dbReference>
<dbReference type="GO" id="GO:0044406">
    <property type="term" value="P:adhesion of symbiont to host"/>
    <property type="evidence" value="ECO:0000315"/>
    <property type="project" value="CGD"/>
</dbReference>
<dbReference type="GO" id="GO:0007155">
    <property type="term" value="P:cell adhesion"/>
    <property type="evidence" value="ECO:0000314"/>
    <property type="project" value="CGD"/>
</dbReference>
<dbReference type="GO" id="GO:0043708">
    <property type="term" value="P:cell adhesion involved in biofilm formation"/>
    <property type="evidence" value="ECO:0000315"/>
    <property type="project" value="CGD"/>
</dbReference>
<dbReference type="GO" id="GO:0043710">
    <property type="term" value="P:cell adhesion involved in multi-species biofilm formation"/>
    <property type="evidence" value="ECO:0000315"/>
    <property type="project" value="CGD"/>
</dbReference>
<dbReference type="GO" id="GO:0043709">
    <property type="term" value="P:cell adhesion involved in single-species biofilm formation"/>
    <property type="evidence" value="ECO:0000315"/>
    <property type="project" value="CGD"/>
</dbReference>
<dbReference type="GO" id="GO:0098609">
    <property type="term" value="P:cell-cell adhesion"/>
    <property type="evidence" value="ECO:0000314"/>
    <property type="project" value="CGD"/>
</dbReference>
<dbReference type="GO" id="GO:0009603">
    <property type="term" value="P:detection of symbiotic fungus"/>
    <property type="evidence" value="ECO:0000315"/>
    <property type="project" value="CGD"/>
</dbReference>
<dbReference type="GO" id="GO:0006897">
    <property type="term" value="P:endocytosis"/>
    <property type="evidence" value="ECO:0000315"/>
    <property type="project" value="CGD"/>
</dbReference>
<dbReference type="GO" id="GO:0044182">
    <property type="term" value="P:filamentous growth of a population of unicellular organisms"/>
    <property type="evidence" value="ECO:0000315"/>
    <property type="project" value="CGD"/>
</dbReference>
<dbReference type="GO" id="GO:0030448">
    <property type="term" value="P:hyphal growth"/>
    <property type="evidence" value="ECO:0000318"/>
    <property type="project" value="GO_Central"/>
</dbReference>
<dbReference type="GO" id="GO:0006878">
    <property type="term" value="P:intracellular copper ion homeostasis"/>
    <property type="evidence" value="ECO:0000315"/>
    <property type="project" value="CGD"/>
</dbReference>
<dbReference type="GO" id="GO:0033215">
    <property type="term" value="P:reductive iron assimilation"/>
    <property type="evidence" value="ECO:0000315"/>
    <property type="project" value="CGD"/>
</dbReference>
<dbReference type="GO" id="GO:0044011">
    <property type="term" value="P:single-species biofilm formation on inanimate substrate"/>
    <property type="evidence" value="ECO:0000315"/>
    <property type="project" value="CGD"/>
</dbReference>
<dbReference type="GO" id="GO:0044409">
    <property type="term" value="P:symbiont entry into host"/>
    <property type="evidence" value="ECO:0000314"/>
    <property type="project" value="CGD"/>
</dbReference>
<dbReference type="GO" id="GO:0044003">
    <property type="term" value="P:symbiont-mediated perturbation of host process"/>
    <property type="evidence" value="ECO:0000315"/>
    <property type="project" value="CGD"/>
</dbReference>
<dbReference type="FunFam" id="2.60.40.1280:FF:000001">
    <property type="entry name" value="Agglutinin-like protein 3"/>
    <property type="match status" value="1"/>
</dbReference>
<dbReference type="FunFam" id="2.60.40.2430:FF:000001">
    <property type="entry name" value="Agglutinin-like protein 3"/>
    <property type="match status" value="1"/>
</dbReference>
<dbReference type="Gene3D" id="2.60.40.1280">
    <property type="match status" value="1"/>
</dbReference>
<dbReference type="Gene3D" id="2.60.40.2430">
    <property type="entry name" value="Agglutinin-like protein, N-terminal domain, N2 subdomain"/>
    <property type="match status" value="1"/>
</dbReference>
<dbReference type="InterPro" id="IPR008966">
    <property type="entry name" value="Adhesion_dom_sf"/>
</dbReference>
<dbReference type="InterPro" id="IPR008440">
    <property type="entry name" value="Agglutinin-like_ALS_rpt"/>
</dbReference>
<dbReference type="InterPro" id="IPR024672">
    <property type="entry name" value="Agglutinin-like_N"/>
</dbReference>
<dbReference type="InterPro" id="IPR043063">
    <property type="entry name" value="Agglutinin-like_N_N2"/>
</dbReference>
<dbReference type="InterPro" id="IPR033504">
    <property type="entry name" value="ALS"/>
</dbReference>
<dbReference type="InterPro" id="IPR011252">
    <property type="entry name" value="Fibrogen-bd_dom1"/>
</dbReference>
<dbReference type="PANTHER" id="PTHR33793:SF2">
    <property type="entry name" value="AGGLUTININ-LIKE PROTEIN 6"/>
    <property type="match status" value="1"/>
</dbReference>
<dbReference type="PANTHER" id="PTHR33793">
    <property type="entry name" value="ALPHA-AGGLUTININ"/>
    <property type="match status" value="1"/>
</dbReference>
<dbReference type="Pfam" id="PF05792">
    <property type="entry name" value="Candida_ALS"/>
    <property type="match status" value="14"/>
</dbReference>
<dbReference type="Pfam" id="PF11766">
    <property type="entry name" value="Candida_ALS_N"/>
    <property type="match status" value="1"/>
</dbReference>
<dbReference type="SMART" id="SM01056">
    <property type="entry name" value="Candida_ALS_N"/>
    <property type="match status" value="1"/>
</dbReference>
<dbReference type="SUPFAM" id="SSF49401">
    <property type="entry name" value="Bacterial adhesins"/>
    <property type="match status" value="1"/>
</dbReference>
<feature type="signal peptide" evidence="1">
    <location>
        <begin position="1"/>
        <end position="17"/>
    </location>
</feature>
<feature type="chain" id="PRO_0000420221" description="Agglutinin-like protein 3">
    <location>
        <begin position="18"/>
        <end position="1134"/>
    </location>
</feature>
<feature type="propeptide" id="PRO_0000429922" description="Removed in mature form" evidence="1">
    <location>
        <begin position="1135"/>
        <end position="1155"/>
    </location>
</feature>
<feature type="repeat" description="ALS 1">
    <location>
        <begin position="365"/>
        <end position="396"/>
    </location>
</feature>
<feature type="repeat" description="ALS 2">
    <location>
        <begin position="401"/>
        <end position="432"/>
    </location>
</feature>
<feature type="repeat" description="ALS 3">
    <location>
        <begin position="438"/>
        <end position="469"/>
    </location>
</feature>
<feature type="repeat" description="ALS 4">
    <location>
        <begin position="474"/>
        <end position="505"/>
    </location>
</feature>
<feature type="repeat" description="ALS 5">
    <location>
        <begin position="510"/>
        <end position="541"/>
    </location>
</feature>
<feature type="repeat" description="ALS 6">
    <location>
        <begin position="546"/>
        <end position="577"/>
    </location>
</feature>
<feature type="repeat" description="ALS 7">
    <location>
        <begin position="582"/>
        <end position="613"/>
    </location>
</feature>
<feature type="repeat" description="ALS 8">
    <location>
        <begin position="618"/>
        <end position="649"/>
    </location>
</feature>
<feature type="repeat" description="ALS 9">
    <location>
        <begin position="654"/>
        <end position="685"/>
    </location>
</feature>
<feature type="repeat" description="ALS 10">
    <location>
        <begin position="690"/>
        <end position="721"/>
    </location>
</feature>
<feature type="repeat" description="ALS 11">
    <location>
        <begin position="726"/>
        <end position="757"/>
    </location>
</feature>
<feature type="repeat" description="ALS 12">
    <location>
        <begin position="762"/>
        <end position="793"/>
    </location>
</feature>
<feature type="repeat" description="ALS 13">
    <location>
        <begin position="798"/>
        <end position="829"/>
    </location>
</feature>
<feature type="repeat" description="ALS 14">
    <location>
        <begin position="834"/>
        <end position="863"/>
    </location>
</feature>
<feature type="region of interest" description="Disordered" evidence="2">
    <location>
        <begin position="936"/>
        <end position="1115"/>
    </location>
</feature>
<feature type="compositionally biased region" description="Low complexity" evidence="2">
    <location>
        <begin position="949"/>
        <end position="965"/>
    </location>
</feature>
<feature type="compositionally biased region" description="Polar residues" evidence="2">
    <location>
        <begin position="966"/>
        <end position="977"/>
    </location>
</feature>
<feature type="compositionally biased region" description="Low complexity" evidence="2">
    <location>
        <begin position="1010"/>
        <end position="1019"/>
    </location>
</feature>
<feature type="compositionally biased region" description="Low complexity" evidence="2">
    <location>
        <begin position="1034"/>
        <end position="1058"/>
    </location>
</feature>
<feature type="compositionally biased region" description="Low complexity" evidence="2">
    <location>
        <begin position="1071"/>
        <end position="1115"/>
    </location>
</feature>
<feature type="lipid moiety-binding region" description="GPI-anchor amidated serine" evidence="1">
    <location>
        <position position="1134"/>
    </location>
</feature>
<feature type="glycosylation site" description="N-linked (GlcNAc...) asparagine" evidence="1">
    <location>
        <position position="471"/>
    </location>
</feature>
<feature type="glycosylation site" description="N-linked (GlcNAc...) asparagine" evidence="1">
    <location>
        <position position="543"/>
    </location>
</feature>
<feature type="glycosylation site" description="N-linked (GlcNAc...) asparagine" evidence="1">
    <location>
        <position position="615"/>
    </location>
</feature>
<feature type="glycosylation site" description="N-linked (GlcNAc...) asparagine" evidence="1">
    <location>
        <position position="651"/>
    </location>
</feature>
<feature type="glycosylation site" description="N-linked (GlcNAc...) asparagine" evidence="1">
    <location>
        <position position="723"/>
    </location>
</feature>
<feature type="glycosylation site" description="N-linked (GlcNAc...) asparagine" evidence="1">
    <location>
        <position position="759"/>
    </location>
</feature>
<feature type="glycosylation site" description="N-linked (GlcNAc...) asparagine" evidence="1">
    <location>
        <position position="795"/>
    </location>
</feature>
<feature type="glycosylation site" description="N-linked (GlcNAc...) asparagine" evidence="1">
    <location>
        <position position="881"/>
    </location>
</feature>
<feature type="glycosylation site" description="N-linked (GlcNAc...) asparagine" evidence="1">
    <location>
        <position position="1023"/>
    </location>
</feature>
<feature type="glycosylation site" description="N-linked (GlcNAc...) asparagine" evidence="1">
    <location>
        <position position="1099"/>
    </location>
</feature>
<feature type="disulfide bond" evidence="32 35 36 37">
    <location>
        <begin position="73"/>
        <end position="150"/>
    </location>
</feature>
<feature type="disulfide bond" evidence="32 35 36 37">
    <location>
        <begin position="96"/>
        <end position="112"/>
    </location>
</feature>
<feature type="disulfide bond" evidence="32 35 36 37">
    <location>
        <begin position="205"/>
        <end position="298"/>
    </location>
</feature>
<feature type="disulfide bond" evidence="32 35 36 37">
    <location>
        <begin position="227"/>
        <end position="256"/>
    </location>
</feature>
<feature type="sequence variant" description="In allele ALS3-2." evidence="5">
    <original>Y</original>
    <variation>F</variation>
    <location>
        <position position="628"/>
    </location>
</feature>
<feature type="sequence variant" description="In allele ALS3-2." evidence="5">
    <original>I</original>
    <variation>V</variation>
    <location>
        <position position="634"/>
    </location>
</feature>
<feature type="sequence variant" description="In allele ALS3-2." evidence="5">
    <original>E</original>
    <variation>G</variation>
    <location>
        <position position="640"/>
    </location>
</feature>
<feature type="sequence variant" description="In allele ALS3-2." evidence="5">
    <original>L</original>
    <variation>I</variation>
    <location>
        <position position="645"/>
    </location>
</feature>
<feature type="sequence variant" description="In allele ALS3-2." evidence="5">
    <location>
        <begin position="665"/>
        <end position="700"/>
    </location>
</feature>
<feature type="sequence variant" description="In allele ALS3-1." evidence="5">
    <original>G</original>
    <variation>E</variation>
    <location>
        <position position="676"/>
    </location>
</feature>
<feature type="sequence variant" description="In allele ALS3-2." evidence="5">
    <location>
        <begin position="743"/>
        <end position="814"/>
    </location>
</feature>
<feature type="sequence variant" description="In allele ALS3-1." evidence="5">
    <original>II</original>
    <variation>VT</variation>
    <location>
        <begin position="814"/>
        <end position="815"/>
    </location>
</feature>
<feature type="sequence variant" description="In allele ALS3-1." evidence="5">
    <original>E</original>
    <variation>G</variation>
    <location>
        <position position="820"/>
    </location>
</feature>
<feature type="sequence variant" description="In allele ALS3-1." evidence="5">
    <original>S</original>
    <variation>P</variation>
    <location>
        <position position="843"/>
    </location>
</feature>
<feature type="sequence variant" description="In allele ALS3-1." evidence="5">
    <original>A</original>
    <variation>T</variation>
    <location>
        <position position="847"/>
    </location>
</feature>
<feature type="sequence variant" description="In allele ALS3-1." evidence="5">
    <original>T</original>
    <variation>I</variation>
    <location>
        <position position="851"/>
    </location>
</feature>
<feature type="sequence variant" description="In allele ALS3-1." evidence="5">
    <original>T</original>
    <variation>S</variation>
    <location>
        <position position="935"/>
    </location>
</feature>
<feature type="sequence variant" description="In allele ALS3-1." evidence="5">
    <original>F</original>
    <variation>V</variation>
    <location>
        <position position="963"/>
    </location>
</feature>
<feature type="sequence variant" description="In allele ALS3-1." evidence="5">
    <original>Q</original>
    <variation>P</variation>
    <location>
        <position position="1062"/>
    </location>
</feature>
<feature type="sequence conflict" description="In Ref. 1; AAO72958/AAO72959." evidence="33" ref="1">
    <original>L</original>
    <variation>S</variation>
    <location>
        <position position="942"/>
    </location>
</feature>
<feature type="strand" evidence="38">
    <location>
        <begin position="24"/>
        <end position="32"/>
    </location>
</feature>
<feature type="strand" evidence="38">
    <location>
        <begin position="48"/>
        <end position="57"/>
    </location>
</feature>
<feature type="turn" evidence="38">
    <location>
        <begin position="58"/>
        <end position="60"/>
    </location>
</feature>
<feature type="strand" evidence="38">
    <location>
        <begin position="66"/>
        <end position="72"/>
    </location>
</feature>
<feature type="strand" evidence="38">
    <location>
        <begin position="74"/>
        <end position="80"/>
    </location>
</feature>
<feature type="strand" evidence="38">
    <location>
        <begin position="82"/>
        <end position="88"/>
    </location>
</feature>
<feature type="strand" evidence="38">
    <location>
        <begin position="91"/>
        <end position="99"/>
    </location>
</feature>
<feature type="turn" evidence="38">
    <location>
        <begin position="102"/>
        <end position="104"/>
    </location>
</feature>
<feature type="strand" evidence="38">
    <location>
        <begin position="106"/>
        <end position="114"/>
    </location>
</feature>
<feature type="strand" evidence="38">
    <location>
        <begin position="123"/>
        <end position="134"/>
    </location>
</feature>
<feature type="strand" evidence="38">
    <location>
        <begin position="139"/>
        <end position="141"/>
    </location>
</feature>
<feature type="helix" evidence="38">
    <location>
        <begin position="142"/>
        <end position="147"/>
    </location>
</feature>
<feature type="strand" evidence="38">
    <location>
        <begin position="153"/>
        <end position="164"/>
    </location>
</feature>
<feature type="strand" evidence="38">
    <location>
        <begin position="166"/>
        <end position="173"/>
    </location>
</feature>
<feature type="strand" evidence="38">
    <location>
        <begin position="184"/>
        <end position="190"/>
    </location>
</feature>
<feature type="helix" evidence="38">
    <location>
        <begin position="191"/>
        <end position="193"/>
    </location>
</feature>
<feature type="strand" evidence="38">
    <location>
        <begin position="195"/>
        <end position="201"/>
    </location>
</feature>
<feature type="strand" evidence="38">
    <location>
        <begin position="209"/>
        <end position="238"/>
    </location>
</feature>
<feature type="strand" evidence="38">
    <location>
        <begin position="251"/>
        <end position="257"/>
    </location>
</feature>
<feature type="strand" evidence="38">
    <location>
        <begin position="260"/>
        <end position="268"/>
    </location>
</feature>
<feature type="strand" evidence="38">
    <location>
        <begin position="272"/>
        <end position="284"/>
    </location>
</feature>
<feature type="strand" evidence="38">
    <location>
        <begin position="287"/>
        <end position="298"/>
    </location>
</feature>
<feature type="strand" evidence="38">
    <location>
        <begin position="303"/>
        <end position="305"/>
    </location>
</feature>
<feature type="strand" evidence="38">
    <location>
        <begin position="308"/>
        <end position="313"/>
    </location>
</feature>
<feature type="strand" evidence="39">
    <location>
        <begin position="321"/>
        <end position="328"/>
    </location>
</feature>
<name>ALS3_CANAL</name>
<proteinExistence type="evidence at protein level"/>
<gene>
    <name type="primary">ALS3</name>
    <name type="synonym">ALS10</name>
    <name type="synonym">ALS8</name>
    <name type="ordered locus">CAALFM_CR07070CA</name>
    <name type="ORF">CaO19.1816</name>
    <name type="ORF">CaO19.2355</name>
    <name type="ORF">CaO19.9379</name>
    <name type="ORF">CaO19.9891</name>
</gene>